<reference key="1">
    <citation type="journal article" date="2008" name="BMC Genomics">
        <title>Genome sequence and rapid evolution of the rice pathogen Xanthomonas oryzae pv. oryzae PXO99A.</title>
        <authorList>
            <person name="Salzberg S.L."/>
            <person name="Sommer D.D."/>
            <person name="Schatz M.C."/>
            <person name="Phillippy A.M."/>
            <person name="Rabinowicz P.D."/>
            <person name="Tsuge S."/>
            <person name="Furutani A."/>
            <person name="Ochiai H."/>
            <person name="Delcher A.L."/>
            <person name="Kelley D."/>
            <person name="Madupu R."/>
            <person name="Puiu D."/>
            <person name="Radune D."/>
            <person name="Shumway M."/>
            <person name="Trapnell C."/>
            <person name="Aparna G."/>
            <person name="Jha G."/>
            <person name="Pandey A."/>
            <person name="Patil P.B."/>
            <person name="Ishihara H."/>
            <person name="Meyer D.F."/>
            <person name="Szurek B."/>
            <person name="Verdier V."/>
            <person name="Koebnik R."/>
            <person name="Dow J.M."/>
            <person name="Ryan R.P."/>
            <person name="Hirata H."/>
            <person name="Tsuyumu S."/>
            <person name="Won Lee S."/>
            <person name="Seo Y.-S."/>
            <person name="Sriariyanum M."/>
            <person name="Ronald P.C."/>
            <person name="Sonti R.V."/>
            <person name="Van Sluys M.-A."/>
            <person name="Leach J.E."/>
            <person name="White F.F."/>
            <person name="Bogdanove A.J."/>
        </authorList>
    </citation>
    <scope>NUCLEOTIDE SEQUENCE [LARGE SCALE GENOMIC DNA]</scope>
    <source>
        <strain>PXO99A</strain>
    </source>
</reference>
<sequence>MTALPAASITSSALDDLDALNAQLEGLRADERVAWALQHGPQDAALSSSFGAQSAVTLHLLSQQRPDIPVILIDTGYLFPETYRFADALTERLKLNLKVYRPLVSRAWMEARHGRLWEQGMVGIDQYNNLRKVEPMRRALDELNVGTWFTGLRRSQSGGRAQTPIVQKRGERYKISPIADWTDRDVWQYLQAHELPYHPLWEQGYVSIGDFHTTRRWEPGMREEDTRFFGLKRECGIHEDI</sequence>
<protein>
    <recommendedName>
        <fullName evidence="1">Phosphoadenosine 5'-phosphosulfate reductase</fullName>
        <shortName evidence="1">PAPS reductase</shortName>
        <ecNumber evidence="1">1.8.4.8</ecNumber>
    </recommendedName>
    <alternativeName>
        <fullName evidence="1">3'-phosphoadenylylsulfate reductase</fullName>
    </alternativeName>
    <alternativeName>
        <fullName evidence="1">PAPS reductase, thioredoxin dependent</fullName>
    </alternativeName>
    <alternativeName>
        <fullName evidence="1">PAPS sulfotransferase</fullName>
    </alternativeName>
    <alternativeName>
        <fullName evidence="1">PAdoPS reductase</fullName>
    </alternativeName>
</protein>
<keyword id="KW-0963">Cytoplasm</keyword>
<keyword id="KW-0560">Oxidoreductase</keyword>
<accession>B2SI06</accession>
<organism>
    <name type="scientific">Xanthomonas oryzae pv. oryzae (strain PXO99A)</name>
    <dbReference type="NCBI Taxonomy" id="360094"/>
    <lineage>
        <taxon>Bacteria</taxon>
        <taxon>Pseudomonadati</taxon>
        <taxon>Pseudomonadota</taxon>
        <taxon>Gammaproteobacteria</taxon>
        <taxon>Lysobacterales</taxon>
        <taxon>Lysobacteraceae</taxon>
        <taxon>Xanthomonas</taxon>
    </lineage>
</organism>
<feature type="chain" id="PRO_1000092191" description="Phosphoadenosine 5'-phosphosulfate reductase">
    <location>
        <begin position="1"/>
        <end position="241"/>
    </location>
</feature>
<feature type="active site" description="Nucleophile; cysteine thiosulfonate intermediate" evidence="1">
    <location>
        <position position="235"/>
    </location>
</feature>
<gene>
    <name evidence="1" type="primary">cysH</name>
    <name type="ordered locus">PXO_02131</name>
</gene>
<name>CYSH_XANOP</name>
<proteinExistence type="inferred from homology"/>
<comment type="function">
    <text evidence="1">Catalyzes the formation of sulfite from phosphoadenosine 5'-phosphosulfate (PAPS) using thioredoxin as an electron donor.</text>
</comment>
<comment type="catalytic activity">
    <reaction evidence="1">
        <text>[thioredoxin]-disulfide + sulfite + adenosine 3',5'-bisphosphate + 2 H(+) = [thioredoxin]-dithiol + 3'-phosphoadenylyl sulfate</text>
        <dbReference type="Rhea" id="RHEA:11724"/>
        <dbReference type="Rhea" id="RHEA-COMP:10698"/>
        <dbReference type="Rhea" id="RHEA-COMP:10700"/>
        <dbReference type="ChEBI" id="CHEBI:15378"/>
        <dbReference type="ChEBI" id="CHEBI:17359"/>
        <dbReference type="ChEBI" id="CHEBI:29950"/>
        <dbReference type="ChEBI" id="CHEBI:50058"/>
        <dbReference type="ChEBI" id="CHEBI:58339"/>
        <dbReference type="ChEBI" id="CHEBI:58343"/>
        <dbReference type="EC" id="1.8.4.8"/>
    </reaction>
</comment>
<comment type="pathway">
    <text evidence="1">Sulfur metabolism; hydrogen sulfide biosynthesis; sulfite from sulfate: step 3/3.</text>
</comment>
<comment type="subcellular location">
    <subcellularLocation>
        <location evidence="1">Cytoplasm</location>
    </subcellularLocation>
</comment>
<comment type="similarity">
    <text evidence="1">Belongs to the PAPS reductase family. CysH subfamily.</text>
</comment>
<dbReference type="EC" id="1.8.4.8" evidence="1"/>
<dbReference type="EMBL" id="CP000967">
    <property type="protein sequence ID" value="ACD60248.1"/>
    <property type="molecule type" value="Genomic_DNA"/>
</dbReference>
<dbReference type="RefSeq" id="WP_011259873.1">
    <property type="nucleotide sequence ID" value="NC_010717.2"/>
</dbReference>
<dbReference type="SMR" id="B2SI06"/>
<dbReference type="KEGG" id="xop:PXO_02131"/>
<dbReference type="eggNOG" id="COG0175">
    <property type="taxonomic scope" value="Bacteria"/>
</dbReference>
<dbReference type="HOGENOM" id="CLU_044089_3_0_6"/>
<dbReference type="UniPathway" id="UPA00140">
    <property type="reaction ID" value="UER00206"/>
</dbReference>
<dbReference type="Proteomes" id="UP000001740">
    <property type="component" value="Chromosome"/>
</dbReference>
<dbReference type="GO" id="GO:0005737">
    <property type="term" value="C:cytoplasm"/>
    <property type="evidence" value="ECO:0007669"/>
    <property type="project" value="UniProtKB-SubCell"/>
</dbReference>
<dbReference type="GO" id="GO:0004604">
    <property type="term" value="F:phosphoadenylyl-sulfate reductase (thioredoxin) activity"/>
    <property type="evidence" value="ECO:0007669"/>
    <property type="project" value="UniProtKB-UniRule"/>
</dbReference>
<dbReference type="GO" id="GO:0070814">
    <property type="term" value="P:hydrogen sulfide biosynthetic process"/>
    <property type="evidence" value="ECO:0007669"/>
    <property type="project" value="UniProtKB-UniRule"/>
</dbReference>
<dbReference type="GO" id="GO:0019379">
    <property type="term" value="P:sulfate assimilation, phosphoadenylyl sulfate reduction by phosphoadenylyl-sulfate reductase (thioredoxin)"/>
    <property type="evidence" value="ECO:0007669"/>
    <property type="project" value="UniProtKB-UniRule"/>
</dbReference>
<dbReference type="CDD" id="cd23945">
    <property type="entry name" value="PAPS_reductase"/>
    <property type="match status" value="1"/>
</dbReference>
<dbReference type="FunFam" id="3.40.50.620:FF:000043">
    <property type="entry name" value="Phosphoadenosine phosphosulfate reductase"/>
    <property type="match status" value="1"/>
</dbReference>
<dbReference type="Gene3D" id="3.40.50.620">
    <property type="entry name" value="HUPs"/>
    <property type="match status" value="1"/>
</dbReference>
<dbReference type="HAMAP" id="MF_00063">
    <property type="entry name" value="CysH"/>
    <property type="match status" value="1"/>
</dbReference>
<dbReference type="InterPro" id="IPR004511">
    <property type="entry name" value="PAPS/APS_Rdtase"/>
</dbReference>
<dbReference type="InterPro" id="IPR002500">
    <property type="entry name" value="PAPS_reduct_dom"/>
</dbReference>
<dbReference type="InterPro" id="IPR011800">
    <property type="entry name" value="PAPS_reductase_CysH"/>
</dbReference>
<dbReference type="InterPro" id="IPR014729">
    <property type="entry name" value="Rossmann-like_a/b/a_fold"/>
</dbReference>
<dbReference type="NCBIfam" id="TIGR00434">
    <property type="entry name" value="cysH"/>
    <property type="match status" value="1"/>
</dbReference>
<dbReference type="NCBIfam" id="TIGR02057">
    <property type="entry name" value="PAPS_reductase"/>
    <property type="match status" value="1"/>
</dbReference>
<dbReference type="NCBIfam" id="NF002537">
    <property type="entry name" value="PRK02090.1"/>
    <property type="match status" value="1"/>
</dbReference>
<dbReference type="PANTHER" id="PTHR46509">
    <property type="entry name" value="PHOSPHOADENOSINE PHOSPHOSULFATE REDUCTASE"/>
    <property type="match status" value="1"/>
</dbReference>
<dbReference type="PANTHER" id="PTHR46509:SF1">
    <property type="entry name" value="PHOSPHOADENOSINE PHOSPHOSULFATE REDUCTASE"/>
    <property type="match status" value="1"/>
</dbReference>
<dbReference type="Pfam" id="PF01507">
    <property type="entry name" value="PAPS_reduct"/>
    <property type="match status" value="1"/>
</dbReference>
<dbReference type="PIRSF" id="PIRSF000857">
    <property type="entry name" value="PAPS_reductase"/>
    <property type="match status" value="1"/>
</dbReference>
<dbReference type="SUPFAM" id="SSF52402">
    <property type="entry name" value="Adenine nucleotide alpha hydrolases-like"/>
    <property type="match status" value="1"/>
</dbReference>
<evidence type="ECO:0000255" key="1">
    <source>
        <dbReference type="HAMAP-Rule" id="MF_00063"/>
    </source>
</evidence>